<name>POB3_YEAST</name>
<feature type="chain" id="PRO_0000203250" description="FACT complex subunit POB3">
    <location>
        <begin position="1"/>
        <end position="552"/>
    </location>
</feature>
<feature type="region of interest" description="Disordered" evidence="1">
    <location>
        <begin position="190"/>
        <end position="209"/>
    </location>
</feature>
<feature type="region of interest" description="Disordered" evidence="1">
    <location>
        <begin position="484"/>
        <end position="552"/>
    </location>
</feature>
<feature type="compositionally biased region" description="Basic and acidic residues" evidence="1">
    <location>
        <begin position="190"/>
        <end position="205"/>
    </location>
</feature>
<feature type="compositionally biased region" description="Acidic residues" evidence="1">
    <location>
        <begin position="490"/>
        <end position="529"/>
    </location>
</feature>
<feature type="compositionally biased region" description="Basic and acidic residues" evidence="1">
    <location>
        <begin position="541"/>
        <end position="552"/>
    </location>
</feature>
<feature type="mutagenesis site" description="In pob3-11; causes severe defects in rate of growth; when associated with C-109." evidence="4">
    <original>R</original>
    <variation>H</variation>
    <location>
        <position position="20"/>
    </location>
</feature>
<feature type="mutagenesis site" description="In pob3-1; causes severe defects in rate of growth; when associated with K-419 and T-489." evidence="4">
    <original>L</original>
    <variation>R</variation>
    <location>
        <position position="78"/>
    </location>
</feature>
<feature type="mutagenesis site" description="In pob3-11; causes severe defects in rate of growth; when associated with H-20." evidence="4">
    <original>R</original>
    <variation>C</variation>
    <location>
        <position position="109"/>
    </location>
</feature>
<feature type="mutagenesis site" description="No effect." evidence="16">
    <original>Q</original>
    <variation>A</variation>
    <variation>D</variation>
    <location>
        <position position="308"/>
    </location>
</feature>
<feature type="mutagenesis site" description="Confers sensitivity to HU indicating a disturbed activity in DNA replication; confers a SPT- phenotype indicating a disturbed activity in transcription." evidence="16">
    <original>Q</original>
    <variation>K</variation>
    <location>
        <position position="308"/>
    </location>
</feature>
<feature type="mutagenesis site" description="Confers sensitivity to HU indicating a disturbed activity in DNA replication." evidence="16">
    <original>Q</original>
    <variation>R</variation>
    <location>
        <position position="308"/>
    </location>
</feature>
<feature type="mutagenesis site" description="No change of sensitivity to HU; confers a SPT- phenotype indicating a disturbed activity in transcription." evidence="16">
    <original>T</original>
    <variation>A</variation>
    <location>
        <position position="311"/>
    </location>
</feature>
<feature type="mutagenesis site" description="In pob3-1; causes severe defects in rate of growth; when associated with R-78 and T-489." evidence="4">
    <original>M</original>
    <variation>K</variation>
    <location>
        <position position="419"/>
    </location>
</feature>
<feature type="mutagenesis site" description="In pob3-1; causes severe defects in rate of growth; when associated with R-78 and K-419." evidence="4">
    <original>S</original>
    <variation>T</variation>
    <location>
        <position position="489"/>
    </location>
</feature>
<feature type="mutagenesis site" description="In pob3-21; causes severe defects in rate of growth." evidence="4">
    <original>K</original>
    <variation>M</variation>
    <location>
        <position position="547"/>
    </location>
</feature>
<feature type="strand" evidence="22">
    <location>
        <begin position="1"/>
        <end position="10"/>
    </location>
</feature>
<feature type="strand" evidence="24">
    <location>
        <begin position="11"/>
        <end position="14"/>
    </location>
</feature>
<feature type="strand" evidence="22">
    <location>
        <begin position="17"/>
        <end position="22"/>
    </location>
</feature>
<feature type="strand" evidence="22">
    <location>
        <begin position="25"/>
        <end position="30"/>
    </location>
</feature>
<feature type="turn" evidence="22">
    <location>
        <begin position="35"/>
        <end position="37"/>
    </location>
</feature>
<feature type="helix" evidence="22">
    <location>
        <begin position="38"/>
        <end position="41"/>
    </location>
</feature>
<feature type="strand" evidence="22">
    <location>
        <begin position="45"/>
        <end position="48"/>
    </location>
</feature>
<feature type="helix" evidence="22">
    <location>
        <begin position="49"/>
        <end position="51"/>
    </location>
</feature>
<feature type="strand" evidence="22">
    <location>
        <begin position="52"/>
        <end position="59"/>
    </location>
</feature>
<feature type="strand" evidence="22">
    <location>
        <begin position="61"/>
        <end position="73"/>
    </location>
</feature>
<feature type="strand" evidence="22">
    <location>
        <begin position="75"/>
        <end position="81"/>
    </location>
</feature>
<feature type="helix" evidence="22">
    <location>
        <begin position="83"/>
        <end position="85"/>
    </location>
</feature>
<feature type="helix" evidence="22">
    <location>
        <begin position="86"/>
        <end position="97"/>
    </location>
</feature>
<feature type="turn" evidence="22">
    <location>
        <begin position="107"/>
        <end position="110"/>
    </location>
</feature>
<feature type="strand" evidence="24">
    <location>
        <begin position="114"/>
        <end position="118"/>
    </location>
</feature>
<feature type="strand" evidence="24">
    <location>
        <begin position="120"/>
        <end position="129"/>
    </location>
</feature>
<feature type="strand" evidence="24">
    <location>
        <begin position="142"/>
        <end position="145"/>
    </location>
</feature>
<feature type="strand" evidence="24">
    <location>
        <begin position="150"/>
        <end position="154"/>
    </location>
</feature>
<feature type="turn" evidence="24">
    <location>
        <begin position="162"/>
        <end position="165"/>
    </location>
</feature>
<feature type="strand" evidence="24">
    <location>
        <begin position="169"/>
        <end position="175"/>
    </location>
</feature>
<feature type="turn" evidence="24">
    <location>
        <begin position="231"/>
        <end position="233"/>
    </location>
</feature>
<feature type="strand" evidence="23">
    <location>
        <begin position="242"/>
        <end position="252"/>
    </location>
</feature>
<feature type="strand" evidence="23">
    <location>
        <begin position="255"/>
        <end position="261"/>
    </location>
</feature>
<feature type="strand" evidence="23">
    <location>
        <begin position="263"/>
        <end position="269"/>
    </location>
</feature>
<feature type="strand" evidence="23">
    <location>
        <begin position="274"/>
        <end position="278"/>
    </location>
</feature>
<feature type="helix" evidence="23">
    <location>
        <begin position="279"/>
        <end position="281"/>
    </location>
</feature>
<feature type="strand" evidence="23">
    <location>
        <begin position="282"/>
        <end position="289"/>
    </location>
</feature>
<feature type="strand" evidence="23">
    <location>
        <begin position="293"/>
        <end position="308"/>
    </location>
</feature>
<feature type="strand" evidence="23">
    <location>
        <begin position="311"/>
        <end position="321"/>
    </location>
</feature>
<feature type="strand" evidence="23">
    <location>
        <begin position="325"/>
        <end position="329"/>
    </location>
</feature>
<feature type="helix" evidence="23">
    <location>
        <begin position="334"/>
        <end position="340"/>
    </location>
</feature>
<feature type="turn" evidence="23">
    <location>
        <begin position="341"/>
        <end position="344"/>
    </location>
</feature>
<feature type="strand" evidence="23">
    <location>
        <begin position="347"/>
        <end position="352"/>
    </location>
</feature>
<feature type="helix" evidence="23">
    <location>
        <begin position="353"/>
        <end position="365"/>
    </location>
</feature>
<feature type="helix" evidence="24">
    <location>
        <begin position="378"/>
        <end position="380"/>
    </location>
</feature>
<feature type="strand" evidence="23">
    <location>
        <begin position="384"/>
        <end position="388"/>
    </location>
</feature>
<feature type="strand" evidence="23">
    <location>
        <begin position="391"/>
        <end position="397"/>
    </location>
</feature>
<feature type="strand" evidence="23">
    <location>
        <begin position="399"/>
        <end position="408"/>
    </location>
</feature>
<feature type="strand" evidence="23">
    <location>
        <begin position="410"/>
        <end position="413"/>
    </location>
</feature>
<feature type="helix" evidence="23">
    <location>
        <begin position="414"/>
        <end position="416"/>
    </location>
</feature>
<feature type="strand" evidence="23">
    <location>
        <begin position="417"/>
        <end position="423"/>
    </location>
</feature>
<feature type="helix" evidence="24">
    <location>
        <begin position="428"/>
        <end position="431"/>
    </location>
</feature>
<feature type="strand" evidence="23">
    <location>
        <begin position="434"/>
        <end position="441"/>
    </location>
</feature>
<feature type="helix" evidence="23">
    <location>
        <begin position="442"/>
        <end position="444"/>
    </location>
</feature>
<feature type="strand" evidence="23">
    <location>
        <begin position="447"/>
        <end position="454"/>
    </location>
</feature>
<feature type="helix" evidence="23">
    <location>
        <begin position="455"/>
        <end position="457"/>
    </location>
</feature>
<feature type="helix" evidence="23">
    <location>
        <begin position="458"/>
        <end position="467"/>
    </location>
</feature>
<accession>Q04636</accession>
<accession>D6VZA4</accession>
<keyword id="KW-0002">3D-structure</keyword>
<keyword id="KW-0158">Chromosome</keyword>
<keyword id="KW-0227">DNA damage</keyword>
<keyword id="KW-0234">DNA repair</keyword>
<keyword id="KW-0235">DNA replication</keyword>
<keyword id="KW-0539">Nucleus</keyword>
<keyword id="KW-1185">Reference proteome</keyword>
<keyword id="KW-0804">Transcription</keyword>
<keyword id="KW-0805">Transcription regulation</keyword>
<comment type="function">
    <text evidence="2 4 5 8 10 12 14 15 16">Component of the FACT complex, a general chromatin factor that acts to reorganize nucleosomes. The FACT complex is involved in multiple processes that require DNA as a template such as mRNA elongation, DNA replication and DNA repair. During transcription elongation the FACT complex acts as a histone chaperone that both destabilizes and restores nucleosomal structure. It facilitates the passage of RNA polymerase II and transcription by promoting the dissociation of one histone H2A-H2B dimer from the nucleosome, then subsequently promotes the reestablishment of the nucleosome following the passage of RNA polymerase II. Transcription elongation is promoted by the repression of transcription initiation from cryptic sites. Also acts in establishing transcription initiation complexes and promotes SPT15/TBP-binding to a TATA box. Together with replication factor-A protein (RPA), FACT may play a role in nucleosome deposition during DNA replication.</text>
</comment>
<comment type="subunit">
    <text evidence="2 3 6 7 9 16 18 19 20">Forms a stable heterodimer with SPT16. The SPT16-POB3 dimer weakly associates with multiple molecules of NHP6 (NHP6A or NHP6B) to form the FACT (yFACT or SNP) complex. The FACT complex interacts with the CK2 (casein kinase II) complex subunits CKA1, CKA2, CKB1 and CKB2 and the components of the transcription machinery CHD1, CTR9, PAF1 and CDC73. The FACT complex interacts with the PAF1 complex. SPT16 interacts with SAS3 and POL1. Interacts directly with RFA1.</text>
</comment>
<comment type="interaction">
    <interactant intactId="EBI-27863">
        <id>Q04636</id>
    </interactant>
    <interactant intactId="EBI-8098">
        <id>P61830</id>
        <label>HHT2</label>
    </interactant>
    <organismsDiffer>false</organismsDiffer>
    <experiments>4</experiments>
</comment>
<comment type="interaction">
    <interactant intactId="EBI-27863">
        <id>Q04636</id>
    </interactant>
    <interactant intactId="EBI-14971">
        <id>P22336</id>
        <label>RFA1</label>
    </interactant>
    <organismsDiffer>false</organismsDiffer>
    <experiments>4</experiments>
</comment>
<comment type="interaction">
    <interactant intactId="EBI-27863">
        <id>Q04636</id>
    </interactant>
    <interactant intactId="EBI-4334">
        <id>P32558</id>
        <label>SPT16</label>
    </interactant>
    <organismsDiffer>false</organismsDiffer>
    <experiments>9</experiments>
</comment>
<comment type="subcellular location">
    <subcellularLocation>
        <location evidence="2">Nucleus</location>
    </subcellularLocation>
    <subcellularLocation>
        <location evidence="2 12">Chromosome</location>
    </subcellularLocation>
    <text evidence="2 12 13 17">Colocalizes with RNA polymerase II on chromatin (PubMed:10413469, PubMed:14585989, PubMed:14739930). Recruited to actively transcribed loci (PubMed:14585989). Associates with the coding region of HTA1 (PubMed:19683497).</text>
</comment>
<comment type="miscellaneous">
    <text>In contrast to the orthologous protein in animals and plants, this protein does not contain a HMG box DNA-binding domain. This function may instead be provided by the HMG box of the associated NHP6A/NHP6B proteins in the FACT complex of yeast.</text>
</comment>
<comment type="miscellaneous">
    <text evidence="11">Present with 22400 molecules/cell in log phase SD medium.</text>
</comment>
<comment type="similarity">
    <text evidence="21">Belongs to the SSRP1 family.</text>
</comment>
<sequence length="552" mass="62994">MSTDFDRIYLNQSKFSGRFRIADSGLGWKISTSGGSAANQARKPFLLPATELSTVQWSRGCRGYDLKINTKNQGVIQLDGFSQDDYNLIKNDFHRRFNIQVEQREHSLRGWNWGKTDLARNEMVFALNGKPTFEIPYARINNTNLTSKNEVGIEFNIQDEEYQPAGDELVEMRFYIPGVIQTNVDENMTKKEESSNEVVPKKEDGAEGEDVQMAVEEKSMAEAFYEELKEKADIGEVAGDAIVSFQDVFFTTPRGRYDIDIYKNSIRLRGKTYEYKLQHRQIQRIVSLPKADDIHHLLVLAIEPPLRQGQTTYPFLVLQFQKDEETEVQLNLEDEDYEENYKDKLKKQYDAKTHIVLSHVLKGLTDRRVIVPGEYKSKYDQCAVSCSFKANEGYLYPLDNAFFFLTKPTLYIPFSDVSMVNISRAGQTSTSSRTFDLEVVLRSNRGSTTFANISKEEQQLLEQFLKSKNLRVKNEDREVQERLQTALGSDSDEEDINMGSAGEDDESVDEDFQVSSDNDADEVAEEFDSDAALSDAEGGSDEERPSKKPKVE</sequence>
<dbReference type="EMBL" id="Z38114">
    <property type="protein sequence ID" value="CAA86251.1"/>
    <property type="molecule type" value="Genomic_DNA"/>
</dbReference>
<dbReference type="EMBL" id="BK006946">
    <property type="protein sequence ID" value="DAA09828.1"/>
    <property type="molecule type" value="Genomic_DNA"/>
</dbReference>
<dbReference type="PIR" id="S48328">
    <property type="entry name" value="S48328"/>
</dbReference>
<dbReference type="RefSeq" id="NP_013642.1">
    <property type="nucleotide sequence ID" value="NM_001182428.1"/>
</dbReference>
<dbReference type="PDB" id="2GCJ">
    <property type="method" value="X-ray"/>
    <property type="resolution" value="2.55 A"/>
    <property type="chains" value="A/B/C/D=220-478"/>
</dbReference>
<dbReference type="PDB" id="2GCL">
    <property type="method" value="X-ray"/>
    <property type="resolution" value="2.21 A"/>
    <property type="chains" value="A/B=220-478"/>
</dbReference>
<dbReference type="PDB" id="3F5R">
    <property type="method" value="X-ray"/>
    <property type="resolution" value="1.70 A"/>
    <property type="chains" value="A=1-168"/>
</dbReference>
<dbReference type="PDB" id="4PQ0">
    <property type="method" value="X-ray"/>
    <property type="resolution" value="1.65 A"/>
    <property type="chains" value="A=232-473"/>
</dbReference>
<dbReference type="PDB" id="7NKY">
    <property type="method" value="EM"/>
    <property type="resolution" value="3.20 A"/>
    <property type="chains" value="O=1-552"/>
</dbReference>
<dbReference type="PDB" id="8XGC">
    <property type="method" value="EM"/>
    <property type="resolution" value="3.70 A"/>
    <property type="chains" value="M=1-552"/>
</dbReference>
<dbReference type="PDBsum" id="2GCJ"/>
<dbReference type="PDBsum" id="2GCL"/>
<dbReference type="PDBsum" id="3F5R"/>
<dbReference type="PDBsum" id="4PQ0"/>
<dbReference type="PDBsum" id="7NKY"/>
<dbReference type="PDBsum" id="8XGC"/>
<dbReference type="EMDB" id="EMD-38317"/>
<dbReference type="SMR" id="Q04636"/>
<dbReference type="BioGRID" id="35097">
    <property type="interactions" value="744"/>
</dbReference>
<dbReference type="ComplexPortal" id="CPX-3215">
    <property type="entry name" value="FACT complex"/>
</dbReference>
<dbReference type="DIP" id="DIP-4083N"/>
<dbReference type="FunCoup" id="Q04636">
    <property type="interactions" value="1270"/>
</dbReference>
<dbReference type="IntAct" id="Q04636">
    <property type="interactions" value="85"/>
</dbReference>
<dbReference type="MINT" id="Q04636"/>
<dbReference type="STRING" id="4932.YML069W"/>
<dbReference type="iPTMnet" id="Q04636"/>
<dbReference type="PaxDb" id="4932-YML069W"/>
<dbReference type="PeptideAtlas" id="Q04636"/>
<dbReference type="DNASU" id="854933"/>
<dbReference type="EnsemblFungi" id="YML069W_mRNA">
    <property type="protein sequence ID" value="YML069W"/>
    <property type="gene ID" value="YML069W"/>
</dbReference>
<dbReference type="GeneID" id="854933"/>
<dbReference type="KEGG" id="sce:YML069W"/>
<dbReference type="AGR" id="SGD:S000004534"/>
<dbReference type="SGD" id="S000004534">
    <property type="gene designation" value="POB3"/>
</dbReference>
<dbReference type="VEuPathDB" id="FungiDB:YML069W"/>
<dbReference type="eggNOG" id="KOG0526">
    <property type="taxonomic scope" value="Eukaryota"/>
</dbReference>
<dbReference type="HOGENOM" id="CLU_017374_3_0_1"/>
<dbReference type="InParanoid" id="Q04636"/>
<dbReference type="OMA" id="QVVTKIF"/>
<dbReference type="OrthoDB" id="498543at2759"/>
<dbReference type="BioCyc" id="YEAST:G3O-32664-MONOMER"/>
<dbReference type="Reactome" id="R-SCE-674695">
    <property type="pathway name" value="RNA Polymerase II Pre-transcription Events"/>
</dbReference>
<dbReference type="Reactome" id="R-SCE-6796648">
    <property type="pathway name" value="TP53 Regulates Transcription of DNA Repair Genes"/>
</dbReference>
<dbReference type="Reactome" id="R-SCE-6804756">
    <property type="pathway name" value="Regulation of TP53 Activity through Phosphorylation"/>
</dbReference>
<dbReference type="BioGRID-ORCS" id="854933">
    <property type="hits" value="0 hits in 10 CRISPR screens"/>
</dbReference>
<dbReference type="CD-CODE" id="E03F929F">
    <property type="entry name" value="Stress granule"/>
</dbReference>
<dbReference type="EvolutionaryTrace" id="Q04636"/>
<dbReference type="PRO" id="PR:Q04636"/>
<dbReference type="Proteomes" id="UP000002311">
    <property type="component" value="Chromosome XIII"/>
</dbReference>
<dbReference type="RNAct" id="Q04636">
    <property type="molecule type" value="protein"/>
</dbReference>
<dbReference type="GO" id="GO:0000785">
    <property type="term" value="C:chromatin"/>
    <property type="evidence" value="ECO:0000314"/>
    <property type="project" value="SGD"/>
</dbReference>
<dbReference type="GO" id="GO:0035101">
    <property type="term" value="C:FACT complex"/>
    <property type="evidence" value="ECO:0000314"/>
    <property type="project" value="SGD"/>
</dbReference>
<dbReference type="GO" id="GO:0003677">
    <property type="term" value="F:DNA binding"/>
    <property type="evidence" value="ECO:0007669"/>
    <property type="project" value="InterPro"/>
</dbReference>
<dbReference type="GO" id="GO:0006325">
    <property type="term" value="P:chromatin organization"/>
    <property type="evidence" value="ECO:0000314"/>
    <property type="project" value="SGD"/>
</dbReference>
<dbReference type="GO" id="GO:0006281">
    <property type="term" value="P:DNA repair"/>
    <property type="evidence" value="ECO:0007669"/>
    <property type="project" value="UniProtKB-KW"/>
</dbReference>
<dbReference type="GO" id="GO:0006261">
    <property type="term" value="P:DNA-templated DNA replication"/>
    <property type="evidence" value="ECO:0000315"/>
    <property type="project" value="SGD"/>
</dbReference>
<dbReference type="GO" id="GO:0034728">
    <property type="term" value="P:nucleosome organization"/>
    <property type="evidence" value="ECO:0000303"/>
    <property type="project" value="ComplexPortal"/>
</dbReference>
<dbReference type="GO" id="GO:0045899">
    <property type="term" value="P:positive regulation of RNA polymerase II transcription preinitiation complex assembly"/>
    <property type="evidence" value="ECO:0000314"/>
    <property type="project" value="SGD"/>
</dbReference>
<dbReference type="GO" id="GO:1902275">
    <property type="term" value="P:regulation of chromatin organization"/>
    <property type="evidence" value="ECO:0000303"/>
    <property type="project" value="ComplexPortal"/>
</dbReference>
<dbReference type="CDD" id="cd13230">
    <property type="entry name" value="PH1_SSRP1-like"/>
    <property type="match status" value="1"/>
</dbReference>
<dbReference type="CDD" id="cd13231">
    <property type="entry name" value="PH2_SSRP1-like"/>
    <property type="match status" value="1"/>
</dbReference>
<dbReference type="CDD" id="cd13229">
    <property type="entry name" value="PH_TFIIH"/>
    <property type="match status" value="1"/>
</dbReference>
<dbReference type="FunFam" id="2.30.29.30:FF:000398">
    <property type="entry name" value="FACT complex subunit POB3"/>
    <property type="match status" value="1"/>
</dbReference>
<dbReference type="FunFam" id="2.30.29.150:FF:000001">
    <property type="entry name" value="Fact complex subunit ssrp1"/>
    <property type="match status" value="1"/>
</dbReference>
<dbReference type="FunFam" id="2.30.29.30:FF:000098">
    <property type="entry name" value="Fact complex subunit ssrp1"/>
    <property type="match status" value="1"/>
</dbReference>
<dbReference type="Gene3D" id="2.30.29.150">
    <property type="match status" value="1"/>
</dbReference>
<dbReference type="Gene3D" id="2.30.29.30">
    <property type="entry name" value="Pleckstrin-homology domain (PH domain)/Phosphotyrosine-binding domain (PTB)"/>
    <property type="match status" value="2"/>
</dbReference>
<dbReference type="Gene3D" id="2.30.29.220">
    <property type="entry name" value="Structure-specific recognition protein (SSRP1)"/>
    <property type="match status" value="1"/>
</dbReference>
<dbReference type="IDEAL" id="IID50326"/>
<dbReference type="InterPro" id="IPR011993">
    <property type="entry name" value="PH-like_dom_sf"/>
</dbReference>
<dbReference type="InterPro" id="IPR013719">
    <property type="entry name" value="RTT106/SPT16-like_middle_dom"/>
</dbReference>
<dbReference type="InterPro" id="IPR050454">
    <property type="entry name" value="RTT106/SSRP1_HistChap/FACT"/>
</dbReference>
<dbReference type="InterPro" id="IPR048993">
    <property type="entry name" value="SSRP1-like_PH1"/>
</dbReference>
<dbReference type="InterPro" id="IPR000969">
    <property type="entry name" value="SSRP1/POB3"/>
</dbReference>
<dbReference type="InterPro" id="IPR035417">
    <property type="entry name" value="SSRP1/POB3_N"/>
</dbReference>
<dbReference type="InterPro" id="IPR024954">
    <property type="entry name" value="SSRP1_DD"/>
</dbReference>
<dbReference type="InterPro" id="IPR038167">
    <property type="entry name" value="SSRP1_sf"/>
</dbReference>
<dbReference type="PANTHER" id="PTHR45849">
    <property type="entry name" value="FACT COMPLEX SUBUNIT SSRP1"/>
    <property type="match status" value="1"/>
</dbReference>
<dbReference type="PANTHER" id="PTHR45849:SF1">
    <property type="entry name" value="FACT COMPLEX SUBUNIT SSRP1"/>
    <property type="match status" value="1"/>
</dbReference>
<dbReference type="Pfam" id="PF21103">
    <property type="entry name" value="PH1_SSRP1-like"/>
    <property type="match status" value="1"/>
</dbReference>
<dbReference type="Pfam" id="PF17292">
    <property type="entry name" value="POB3_N"/>
    <property type="match status" value="1"/>
</dbReference>
<dbReference type="Pfam" id="PF08512">
    <property type="entry name" value="Rttp106-like_middle"/>
    <property type="match status" value="1"/>
</dbReference>
<dbReference type="Pfam" id="PF03531">
    <property type="entry name" value="SSrecog"/>
    <property type="match status" value="1"/>
</dbReference>
<dbReference type="PRINTS" id="PR00887">
    <property type="entry name" value="SSRCOGNITION"/>
</dbReference>
<dbReference type="SMART" id="SM01287">
    <property type="entry name" value="Rtt106"/>
    <property type="match status" value="1"/>
</dbReference>
<dbReference type="SUPFAM" id="SSF50729">
    <property type="entry name" value="PH domain-like"/>
    <property type="match status" value="1"/>
</dbReference>
<organism>
    <name type="scientific">Saccharomyces cerevisiae (strain ATCC 204508 / S288c)</name>
    <name type="common">Baker's yeast</name>
    <dbReference type="NCBI Taxonomy" id="559292"/>
    <lineage>
        <taxon>Eukaryota</taxon>
        <taxon>Fungi</taxon>
        <taxon>Dikarya</taxon>
        <taxon>Ascomycota</taxon>
        <taxon>Saccharomycotina</taxon>
        <taxon>Saccharomycetes</taxon>
        <taxon>Saccharomycetales</taxon>
        <taxon>Saccharomycetaceae</taxon>
        <taxon>Saccharomyces</taxon>
    </lineage>
</organism>
<evidence type="ECO:0000256" key="1">
    <source>
        <dbReference type="SAM" id="MobiDB-lite"/>
    </source>
</evidence>
<evidence type="ECO:0000269" key="2">
    <source>
    </source>
</evidence>
<evidence type="ECO:0000269" key="3">
    <source>
    </source>
</evidence>
<evidence type="ECO:0000269" key="4">
    <source>
    </source>
</evidence>
<evidence type="ECO:0000269" key="5">
    <source>
    </source>
</evidence>
<evidence type="ECO:0000269" key="6">
    <source>
    </source>
</evidence>
<evidence type="ECO:0000269" key="7">
    <source>
    </source>
</evidence>
<evidence type="ECO:0000269" key="8">
    <source>
    </source>
</evidence>
<evidence type="ECO:0000269" key="9">
    <source>
    </source>
</evidence>
<evidence type="ECO:0000269" key="10">
    <source>
    </source>
</evidence>
<evidence type="ECO:0000269" key="11">
    <source>
    </source>
</evidence>
<evidence type="ECO:0000269" key="12">
    <source>
    </source>
</evidence>
<evidence type="ECO:0000269" key="13">
    <source>
    </source>
</evidence>
<evidence type="ECO:0000269" key="14">
    <source>
    </source>
</evidence>
<evidence type="ECO:0000269" key="15">
    <source>
    </source>
</evidence>
<evidence type="ECO:0000269" key="16">
    <source>
    </source>
</evidence>
<evidence type="ECO:0000269" key="17">
    <source>
    </source>
</evidence>
<evidence type="ECO:0000269" key="18">
    <source>
    </source>
</evidence>
<evidence type="ECO:0000269" key="19">
    <source>
    </source>
</evidence>
<evidence type="ECO:0000269" key="20">
    <source>
    </source>
</evidence>
<evidence type="ECO:0000305" key="21"/>
<evidence type="ECO:0007829" key="22">
    <source>
        <dbReference type="PDB" id="3F5R"/>
    </source>
</evidence>
<evidence type="ECO:0007829" key="23">
    <source>
        <dbReference type="PDB" id="4PQ0"/>
    </source>
</evidence>
<evidence type="ECO:0007829" key="24">
    <source>
        <dbReference type="PDB" id="7NKY"/>
    </source>
</evidence>
<reference key="1">
    <citation type="journal article" date="1997" name="Nature">
        <title>The nucleotide sequence of Saccharomyces cerevisiae chromosome XIII.</title>
        <authorList>
            <person name="Bowman S."/>
            <person name="Churcher C.M."/>
            <person name="Badcock K."/>
            <person name="Brown D."/>
            <person name="Chillingworth T."/>
            <person name="Connor R."/>
            <person name="Dedman K."/>
            <person name="Devlin K."/>
            <person name="Gentles S."/>
            <person name="Hamlin N."/>
            <person name="Hunt S."/>
            <person name="Jagels K."/>
            <person name="Lye G."/>
            <person name="Moule S."/>
            <person name="Odell C."/>
            <person name="Pearson D."/>
            <person name="Rajandream M.A."/>
            <person name="Rice P."/>
            <person name="Skelton J."/>
            <person name="Walsh S.V."/>
            <person name="Whitehead S."/>
            <person name="Barrell B.G."/>
        </authorList>
    </citation>
    <scope>NUCLEOTIDE SEQUENCE [LARGE SCALE GENOMIC DNA]</scope>
    <source>
        <strain>ATCC 204508 / S288c</strain>
    </source>
</reference>
<reference key="2">
    <citation type="journal article" date="2014" name="G3 (Bethesda)">
        <title>The reference genome sequence of Saccharomyces cerevisiae: Then and now.</title>
        <authorList>
            <person name="Engel S.R."/>
            <person name="Dietrich F.S."/>
            <person name="Fisk D.G."/>
            <person name="Binkley G."/>
            <person name="Balakrishnan R."/>
            <person name="Costanzo M.C."/>
            <person name="Dwight S.S."/>
            <person name="Hitz B.C."/>
            <person name="Karra K."/>
            <person name="Nash R.S."/>
            <person name="Weng S."/>
            <person name="Wong E.D."/>
            <person name="Lloyd P."/>
            <person name="Skrzypek M.S."/>
            <person name="Miyasato S.R."/>
            <person name="Simison M."/>
            <person name="Cherry J.M."/>
        </authorList>
    </citation>
    <scope>GENOME REANNOTATION</scope>
    <source>
        <strain>ATCC 204508 / S288c</strain>
    </source>
</reference>
<reference key="3">
    <citation type="journal article" date="1997" name="Mol. Cell. Biol.">
        <title>The Saccharomyces cerevisiae DNA polymerase alpha catalytic subunit interacts with Cdc68/Spt16 and with Pob3, a protein similar to an HMG1-like protein.</title>
        <authorList>
            <person name="Wittmeyer J."/>
            <person name="Formosa T."/>
        </authorList>
    </citation>
    <scope>INTERACTION WITH POL1</scope>
</reference>
<reference key="4">
    <citation type="journal article" date="1998" name="Genetics">
        <title>The yeast protein complex containing cdc68 and pob3 mediates core-promoter repression through the cdc68 N-terminal domain.</title>
        <authorList>
            <person name="Evans D.R.H."/>
            <person name="Brewster N.K."/>
            <person name="Xu Q."/>
            <person name="Rowley A."/>
            <person name="Altheim B.A."/>
            <person name="Johnston G.C."/>
            <person name="Singer R.A."/>
        </authorList>
    </citation>
    <scope>INTERACTION WITH SPT16</scope>
</reference>
<reference key="5">
    <citation type="journal article" date="1998" name="J. Biol. Chem.">
        <title>Characterization of the CP complex, an abundant dimer of Cdc68 and Pob3 proteins that regulates yeast transcriptional activation and chromatin repression.</title>
        <authorList>
            <person name="Brewster N.K."/>
            <person name="Johnston G.C."/>
            <person name="Singer R.A."/>
        </authorList>
    </citation>
    <scope>INTERACTION WITH SPT16</scope>
</reference>
<reference key="6">
    <citation type="journal article" date="1999" name="Biochemistry">
        <title>Spt16 and Pob3 of Saccharomyces cerevisiae form an essential, abundant heterodimer that is nuclear, chromatin-associated, and copurifies with DNA polymerase alpha.</title>
        <authorList>
            <person name="Wittmeyer J."/>
            <person name="Joss L."/>
            <person name="Formosa T."/>
        </authorList>
    </citation>
    <scope>FUNCTION</scope>
    <scope>INTERACTION WITH SPT16</scope>
    <scope>SUBCELLULAR LOCATION</scope>
</reference>
<reference key="7">
    <citation type="journal article" date="2000" name="Genes Dev.">
        <title>The something about silencing protein, Sas3, is the catalytic subunit of NuA3, a yTAF(II)30-containing HAT complex that interacts with the Spt16 subunit of the yeast CP (Cdc68/Pob3)-FACT complex.</title>
        <authorList>
            <person name="John S."/>
            <person name="Howe L."/>
            <person name="Tafrov S.T."/>
            <person name="Grant P.A."/>
            <person name="Sternglanz R."/>
            <person name="Workman J.L."/>
        </authorList>
    </citation>
    <scope>INTERACTION WITH SAS3</scope>
</reference>
<reference key="8">
    <citation type="journal article" date="2000" name="Genetics">
        <title>POB3 is required for both transcription and replication in the yeast Saccharomyces cerevisiae.</title>
        <authorList>
            <person name="Schlesinger M.B."/>
            <person name="Formosa T."/>
        </authorList>
    </citation>
    <scope>FUNCTION</scope>
    <scope>MUTAGENESIS OF ARG-20; LEU-78; ARG-109; MET-419; SER-489 AND LYS-547</scope>
</reference>
<reference key="9">
    <citation type="journal article" date="2001" name="EMBO J.">
        <title>Spt16-Pob3 and the HMG protein Nhp6 combine to form the nucleosome-binding factor SPN.</title>
        <authorList>
            <person name="Formosa T."/>
            <person name="Eriksson P."/>
            <person name="Wittmeyer J."/>
            <person name="Ginn J."/>
            <person name="Yu Y."/>
            <person name="Stillman D.J."/>
        </authorList>
    </citation>
    <scope>ASSOCIATION OF THE SPT16-POB3 DIMER WITH NHP6A/B AND NUCLEOSOMES</scope>
    <scope>FUNCTION OF THE FACT COMPLEX</scope>
</reference>
<reference key="10">
    <citation type="journal article" date="2001" name="Mol. Cell. Biol.">
        <title>A bipartite yeast SSRP1 analog comprised of Pob3 and Nhp6 proteins modulates transcription.</title>
        <authorList>
            <person name="Brewster N.K."/>
            <person name="Johnston G.C."/>
            <person name="Singer R.A."/>
        </authorList>
    </citation>
    <scope>ASSOCIATION OF THE SPT16-POB3 DIMER WITH NHP6A/B</scope>
</reference>
<reference key="11">
    <citation type="journal article" date="2002" name="EMBO J.">
        <title>The Paf1 complex physically and functionally associates with transcription elongation factors in vivo.</title>
        <authorList>
            <person name="Squazzo S.L."/>
            <person name="Costa P.J."/>
            <person name="Lindstrom D.L."/>
            <person name="Kumer K.E."/>
            <person name="Simic R."/>
            <person name="Jennings J.L."/>
            <person name="Link A.J."/>
            <person name="Arndt K.M."/>
            <person name="Hartzog G.A."/>
        </authorList>
    </citation>
    <scope>INTERACTION WITH PAF1 COMPLEX</scope>
</reference>
<reference key="12">
    <citation type="journal article" date="2002" name="Genetics">
        <title>Defects in SPT16 or POB3 (yFACT) in Saccharomyces cerevisiae cause dependence on the Hir/Hpc pathway: polymerase passage may degrade chromatin structure.</title>
        <authorList>
            <person name="Formosa T."/>
            <person name="Ruone S."/>
            <person name="Adams M.D."/>
            <person name="Olsen A.E."/>
            <person name="Eriksson P."/>
            <person name="Yu Y."/>
            <person name="Rhoades A.R."/>
            <person name="Kaufman P.D."/>
            <person name="Stillman D.J."/>
        </authorList>
    </citation>
    <scope>FUNCTION OF THE FACT COMPLEX</scope>
</reference>
<reference key="13">
    <citation type="journal article" date="2002" name="Mol. Cell. Biol.">
        <title>RNA polymerase II elongation factors of Saccharomyces cerevisiae: a targeted proteomics approach.</title>
        <authorList>
            <person name="Krogan N.J."/>
            <person name="Kim M."/>
            <person name="Ahn S.H."/>
            <person name="Zhong G."/>
            <person name="Kobor M.S."/>
            <person name="Cagney G."/>
            <person name="Emili A."/>
            <person name="Shilatifard A."/>
            <person name="Buratowski S."/>
            <person name="Greenblatt J.F."/>
        </authorList>
    </citation>
    <scope>INTERACTION WITH CHD1; CTR9; PAF1; CDC73; CKA1; CKA2; CKB1; CKB2 AND HISTONES</scope>
</reference>
<reference key="14">
    <citation type="journal article" date="2003" name="EMBO J.">
        <title>Chromatin remodeling protein Chd1 interacts with transcription elongation factors and localizes to transcribed genes.</title>
        <authorList>
            <person name="Simic R."/>
            <person name="Lindstrom D.L."/>
            <person name="Tran H.G."/>
            <person name="Roinick K.L."/>
            <person name="Costa P.J."/>
            <person name="Johnson A.D."/>
            <person name="Hartzog G.A."/>
            <person name="Arndt K.M."/>
        </authorList>
    </citation>
    <scope>INTERACTION WITH CHD1</scope>
</reference>
<reference key="15">
    <citation type="journal article" date="2003" name="J. Biol. Chem.">
        <title>Multiple Nhp6 molecules are required to recruit Spt16-Pob3 to form yFACT complexes and to reorganize nucleosomes.</title>
        <authorList>
            <person name="Ruone S."/>
            <person name="Rhoades A.R."/>
            <person name="Formosa T."/>
        </authorList>
    </citation>
    <scope>ASSOCIATION OF THE SPT16-POB3 DIMER WITH NHP6A/B</scope>
</reference>
<reference key="16">
    <citation type="journal article" date="2003" name="Mol. Cell. Biol.">
        <title>The FACT complex travels with elongating RNA polymerase II and is important for the fidelity of transcriptional initiation in vivo.</title>
        <authorList>
            <person name="Mason P.B."/>
            <person name="Struhl K."/>
        </authorList>
    </citation>
    <scope>FUNCTION OF THE FACT COMPLEX</scope>
    <scope>SUBCELLULAR LOCATION</scope>
</reference>
<reference key="17">
    <citation type="journal article" date="2004" name="Mol. Cell. Biol.">
        <authorList>
            <person name="Mason P.B."/>
            <person name="Struhl K."/>
        </authorList>
    </citation>
    <scope>ERRATUM OF PUBMED:14585989</scope>
</reference>
<reference key="18">
    <citation type="journal article" date="2003" name="Nature">
        <title>Global analysis of protein expression in yeast.</title>
        <authorList>
            <person name="Ghaemmaghami S."/>
            <person name="Huh W.-K."/>
            <person name="Bower K."/>
            <person name="Howson R.W."/>
            <person name="Belle A."/>
            <person name="Dephoure N."/>
            <person name="O'Shea E.K."/>
            <person name="Weissman J.S."/>
        </authorList>
    </citation>
    <scope>LEVEL OF PROTEIN EXPRESSION [LARGE SCALE ANALYSIS]</scope>
</reference>
<reference key="19">
    <citation type="journal article" date="2003" name="Science">
        <title>Transcription elongation factors repress transcription initiation from cryptic sites.</title>
        <authorList>
            <person name="Kaplan C.D."/>
            <person name="Laprade L."/>
            <person name="Winston F."/>
        </authorList>
    </citation>
    <scope>FUNCTION OF THE FACT COMPLEX</scope>
</reference>
<reference key="20">
    <citation type="journal article" date="2004" name="EMBO J.">
        <title>Transitions in RNA polymerase II elongation complexes at the 3' ends of genes.</title>
        <authorList>
            <person name="Kim M."/>
            <person name="Ahn S.-H."/>
            <person name="Krogan N.J."/>
            <person name="Greenblatt J.F."/>
            <person name="Buratowski S."/>
        </authorList>
    </citation>
    <scope>SUBCELLULAR LOCATION</scope>
</reference>
<reference key="21">
    <citation type="journal article" date="2004" name="Mol. Cell. Biol.">
        <title>Structural features of nucleosomes reorganized by yeast FACT and its HMG box component, Nhp6.</title>
        <authorList>
            <person name="Rhoades A.R."/>
            <person name="Ruone S."/>
            <person name="Formosa T."/>
        </authorList>
    </citation>
    <scope>FUNCTION OF THE FACT COMPLEX</scope>
</reference>
<reference key="22">
    <citation type="journal article" date="2005" name="Mol. Cell. Biol.">
        <title>The yeast FACT complex has a role in transcriptional initiation.</title>
        <authorList>
            <person name="Biswas D."/>
            <person name="Yu Y."/>
            <person name="Prall M."/>
            <person name="Formosa T."/>
            <person name="Stillman D.J."/>
        </authorList>
    </citation>
    <scope>FUNCTION OF THE FACT COMPLEX</scope>
</reference>
<reference key="23">
    <citation type="journal article" date="2008" name="Mol. Cell. Proteomics">
        <title>A multidimensional chromatography technology for in-depth phosphoproteome analysis.</title>
        <authorList>
            <person name="Albuquerque C.P."/>
            <person name="Smolka M.B."/>
            <person name="Payne S.H."/>
            <person name="Bafna V."/>
            <person name="Eng J."/>
            <person name="Zhou H."/>
        </authorList>
    </citation>
    <scope>IDENTIFICATION BY MASS SPECTROMETRY [LARGE SCALE ANALYSIS]</scope>
</reference>
<reference key="24">
    <citation type="journal article" date="2009" name="Mol. Cell">
        <title>Two-color cell array screen reveals interdependent roles for histone chaperones and a chromatin boundary regulator in histone gene repression.</title>
        <authorList>
            <person name="Fillingham J."/>
            <person name="Kainth P."/>
            <person name="Lambert J.P."/>
            <person name="van Bakel H."/>
            <person name="Tsui K."/>
            <person name="Pena-Castillo L."/>
            <person name="Nislow C."/>
            <person name="Figeys D."/>
            <person name="Hughes T.R."/>
            <person name="Greenblatt J."/>
            <person name="Andrews B.J."/>
        </authorList>
    </citation>
    <scope>SUBCELLULAR LOCATION</scope>
</reference>
<reference key="25">
    <citation type="journal article" date="2006" name="Mol. Cell">
        <title>The structure of the yFACT Pob3-M domain, its interaction with the DNA replication factor RPA, and a potential role in nucleosome deposition.</title>
        <authorList>
            <person name="Vandemark A.P."/>
            <person name="Blanksma M."/>
            <person name="Ferris E."/>
            <person name="Heroux A."/>
            <person name="Hill C.P."/>
            <person name="Formosa T."/>
        </authorList>
    </citation>
    <scope>X-RAY CRYSTALLOGRAPHY (2.2 ANGSTROMS) OF 220-478</scope>
    <scope>FUNCTION</scope>
    <scope>INTERACTION WITH RFA1</scope>
    <scope>MUTAGENESIS OF GLN-308 AND THR-311</scope>
</reference>
<protein>
    <recommendedName>
        <fullName>FACT complex subunit POB3</fullName>
    </recommendedName>
    <alternativeName>
        <fullName>Facilitates chromatin transcription complex subunit POB3</fullName>
    </alternativeName>
</protein>
<gene>
    <name type="primary">POB3</name>
    <name type="ordered locus">YML069W</name>
</gene>
<proteinExistence type="evidence at protein level"/>